<dbReference type="EC" id="1.1.1.346"/>
<dbReference type="EMBL" id="M12799">
    <property type="protein sequence ID" value="AAA83534.1"/>
    <property type="molecule type" value="Genomic_DNA"/>
</dbReference>
<dbReference type="PIR" id="I40838">
    <property type="entry name" value="I40838"/>
</dbReference>
<dbReference type="PDB" id="1A80">
    <property type="method" value="X-ray"/>
    <property type="resolution" value="2.10 A"/>
    <property type="chains" value="A=2-278"/>
</dbReference>
<dbReference type="PDB" id="1HW6">
    <property type="method" value="X-ray"/>
    <property type="resolution" value="1.90 A"/>
    <property type="chains" value="A=1-278"/>
</dbReference>
<dbReference type="PDB" id="1M9H">
    <property type="method" value="X-ray"/>
    <property type="resolution" value="2.00 A"/>
    <property type="chains" value="A=1-278"/>
</dbReference>
<dbReference type="PDBsum" id="1A80"/>
<dbReference type="PDBsum" id="1HW6"/>
<dbReference type="PDBsum" id="1M9H"/>
<dbReference type="SMR" id="P06632"/>
<dbReference type="DrugBank" id="DB03461">
    <property type="generic name" value="Nicotinamide adenine dinucleotide phosphate"/>
</dbReference>
<dbReference type="KEGG" id="ag:AAA83534"/>
<dbReference type="BioCyc" id="MetaCyc:MONOMER-17833"/>
<dbReference type="BRENDA" id="1.1.1.274">
    <property type="organism ID" value="1664"/>
</dbReference>
<dbReference type="BRENDA" id="1.1.1.346">
    <property type="organism ID" value="1664"/>
</dbReference>
<dbReference type="SABIO-RK" id="P06632"/>
<dbReference type="EvolutionaryTrace" id="P06632"/>
<dbReference type="GO" id="GO:0005737">
    <property type="term" value="C:cytoplasm"/>
    <property type="evidence" value="ECO:0007669"/>
    <property type="project" value="UniProtKB-SubCell"/>
</dbReference>
<dbReference type="GO" id="GO:0004033">
    <property type="term" value="F:aldo-keto reductase (NADPH) activity"/>
    <property type="evidence" value="ECO:0007669"/>
    <property type="project" value="TreeGrafter"/>
</dbReference>
<dbReference type="GO" id="GO:0019853">
    <property type="term" value="P:L-ascorbic acid biosynthetic process"/>
    <property type="evidence" value="ECO:0007669"/>
    <property type="project" value="UniProtKB-KW"/>
</dbReference>
<dbReference type="CDD" id="cd19130">
    <property type="entry name" value="AKR_AKR5C1"/>
    <property type="match status" value="1"/>
</dbReference>
<dbReference type="FunFam" id="3.20.20.100:FF:000015">
    <property type="entry name" value="Oxidoreductase, aldo/keto reductase family"/>
    <property type="match status" value="1"/>
</dbReference>
<dbReference type="Gene3D" id="3.20.20.100">
    <property type="entry name" value="NADP-dependent oxidoreductase domain"/>
    <property type="match status" value="1"/>
</dbReference>
<dbReference type="InterPro" id="IPR020471">
    <property type="entry name" value="AKR"/>
</dbReference>
<dbReference type="InterPro" id="IPR044503">
    <property type="entry name" value="AKR5C1"/>
</dbReference>
<dbReference type="InterPro" id="IPR018170">
    <property type="entry name" value="Aldo/ket_reductase_CS"/>
</dbReference>
<dbReference type="InterPro" id="IPR023210">
    <property type="entry name" value="NADP_OxRdtase_dom"/>
</dbReference>
<dbReference type="InterPro" id="IPR036812">
    <property type="entry name" value="NADP_OxRdtase_dom_sf"/>
</dbReference>
<dbReference type="PANTHER" id="PTHR43827">
    <property type="entry name" value="2,5-DIKETO-D-GLUCONIC ACID REDUCTASE"/>
    <property type="match status" value="1"/>
</dbReference>
<dbReference type="PANTHER" id="PTHR43827:SF3">
    <property type="entry name" value="NADP-DEPENDENT OXIDOREDUCTASE DOMAIN-CONTAINING PROTEIN"/>
    <property type="match status" value="1"/>
</dbReference>
<dbReference type="Pfam" id="PF00248">
    <property type="entry name" value="Aldo_ket_red"/>
    <property type="match status" value="1"/>
</dbReference>
<dbReference type="PIRSF" id="PIRSF000097">
    <property type="entry name" value="AKR"/>
    <property type="match status" value="1"/>
</dbReference>
<dbReference type="PRINTS" id="PR00069">
    <property type="entry name" value="ALDKETRDTASE"/>
</dbReference>
<dbReference type="SUPFAM" id="SSF51430">
    <property type="entry name" value="NAD(P)-linked oxidoreductase"/>
    <property type="match status" value="1"/>
</dbReference>
<dbReference type="PROSITE" id="PS00798">
    <property type="entry name" value="ALDOKETO_REDUCTASE_1"/>
    <property type="match status" value="1"/>
</dbReference>
<reference key="1">
    <citation type="journal article" date="1985" name="Science">
        <title>Production of 2-keto-L-gulonate, an intermediate in L-ascorbate synthesis, by a genetically modified Erwinia herbicola.</title>
        <authorList>
            <person name="Anderson S."/>
            <person name="Marks C.B."/>
            <person name="Lazarus R.A."/>
            <person name="Miller J.V."/>
            <person name="Stafford K."/>
            <person name="Seymour J."/>
            <person name="Light D."/>
            <person name="Rastetter W."/>
            <person name="Estell D.A."/>
        </authorList>
    </citation>
    <scope>NUCLEOTIDE SEQUENCE [GENOMIC DNA]</scope>
    <scope>PROTEIN SEQUENCE OF 2-41; 76-89; 97-123 AND 184-194</scope>
    <scope>CHARACTERIZATION</scope>
</reference>
<reference key="2">
    <citation type="journal article" date="1987" name="J. Biol. Chem.">
        <title>Purification and characterization of 2,5-diketo-D-gluconate reductase from Corynebacterium sp.</title>
        <authorList>
            <person name="Miller J.V."/>
            <person name="Estell D.A."/>
            <person name="Lazarus R.A."/>
        </authorList>
    </citation>
    <scope>PROTEIN SEQUENCE OF 2-41</scope>
    <scope>CHARACTERIZATION</scope>
    <scope>BIOPHYSICOCHEMICAL PROPERTIES</scope>
</reference>
<reference key="3">
    <citation type="journal article" date="2000" name="Proteins">
        <title>Molecular modeling of substrate binding in wild-type and mutant Corynebacteria 2,5-diketo-D-gluconate reductases.</title>
        <authorList>
            <person name="Khurana S."/>
            <person name="Sanli G."/>
            <person name="Powers D.B."/>
            <person name="Anderson S."/>
            <person name="Blaber M."/>
        </authorList>
    </citation>
    <scope>3D-STRUCTURE MODELING OF SUBSTRATE-BINDING SITE</scope>
</reference>
<reference key="4">
    <citation type="journal article" date="1998" name="Proc. Natl. Acad. Sci. U.S.A.">
        <title>Crystal structure of 2,5-diketo-D-gluconic acid reductase A complexed with NADPH at 2.1-A resolution.</title>
        <authorList>
            <person name="Khurana S."/>
            <person name="Powers D.B."/>
            <person name="Anderson S."/>
            <person name="Blaber M."/>
        </authorList>
    </citation>
    <scope>X-RAY CRYSTALLOGRAPHY (2.1 ANGSTROMS)</scope>
</reference>
<reference key="5">
    <citation type="journal article" date="2001" name="J. Mol. Biol.">
        <title>Structural assembly of the active site in an aldo-keto reductase by NADPH cofactor.</title>
        <authorList>
            <person name="Sanli G."/>
            <person name="Blaber M."/>
        </authorList>
    </citation>
    <scope>X-RAY CRYSTALLOGRAPHY (1.9 ANGSTROMS)</scope>
    <scope>ACTIVE SITE</scope>
</reference>
<reference key="6">
    <citation type="journal article" date="2004" name="Protein Sci.">
        <title>Structural alteration of cofactor specificity in Corynebacterium 2,5-diketo-D-gluconic acid reductase.</title>
        <authorList>
            <person name="Sanli G."/>
            <person name="Banta S."/>
            <person name="Anderson S."/>
            <person name="Blaber M."/>
        </authorList>
    </citation>
    <scope>X-RAY CRYSTALLOGRAPHY (2.0 ANGSTROMS) OF MUTANT WITH TYR-22; GLY-232; HIS-238 AND GLY-272 IN COMPLEX WITH NADH</scope>
</reference>
<proteinExistence type="evidence at protein level"/>
<accession>P06632</accession>
<organism>
    <name type="scientific">Corynebacterium sp. (strain ATCC 31090)</name>
    <dbReference type="NCBI Taxonomy" id="268952"/>
    <lineage>
        <taxon>Bacteria</taxon>
        <taxon>Bacillati</taxon>
        <taxon>Actinomycetota</taxon>
        <taxon>Actinomycetes</taxon>
        <taxon>Mycobacteriales</taxon>
        <taxon>Corynebacteriaceae</taxon>
        <taxon>Corynebacterium</taxon>
    </lineage>
</organism>
<keyword id="KW-0002">3D-structure</keyword>
<keyword id="KW-0060">Ascorbate biosynthesis</keyword>
<keyword id="KW-0963">Cytoplasm</keyword>
<keyword id="KW-0903">Direct protein sequencing</keyword>
<keyword id="KW-0521">NADP</keyword>
<keyword id="KW-0560">Oxidoreductase</keyword>
<protein>
    <recommendedName>
        <fullName>2,5-diketo-D-gluconic acid reductase A</fullName>
        <shortName>2,5-DKG reductase A</shortName>
        <shortName>2,5-DKGR A</shortName>
        <shortName>25DKGR-A</shortName>
        <ecNumber>1.1.1.346</ecNumber>
    </recommendedName>
    <alternativeName>
        <fullName>AKR5C</fullName>
    </alternativeName>
</protein>
<feature type="initiator methionine" description="Removed" evidence="4 5">
    <location>
        <position position="1"/>
    </location>
</feature>
<feature type="chain" id="PRO_0000124597" description="2,5-diketo-D-gluconic acid reductase A">
    <location>
        <begin position="2"/>
        <end position="278"/>
    </location>
</feature>
<feature type="region of interest" description="Disordered" evidence="1">
    <location>
        <begin position="259"/>
        <end position="278"/>
    </location>
</feature>
<feature type="active site" description="Proton donor" evidence="2">
    <location>
        <position position="50"/>
    </location>
</feature>
<feature type="binding site" evidence="2">
    <location>
        <position position="108"/>
    </location>
    <ligand>
        <name>substrate</name>
    </ligand>
</feature>
<feature type="binding site" evidence="3">
    <location>
        <begin position="188"/>
        <end position="242"/>
    </location>
    <ligand>
        <name>NADP(+)</name>
        <dbReference type="ChEBI" id="CHEBI:58349"/>
    </ligand>
</feature>
<feature type="mutagenesis site" description="Tighter binding of NADH.">
    <original>F</original>
    <variation>Y</variation>
    <location>
        <position position="22"/>
    </location>
</feature>
<feature type="mutagenesis site" description="Tighter binding of NADH.">
    <original>K</original>
    <variation>G</variation>
    <location>
        <position position="232"/>
    </location>
</feature>
<feature type="mutagenesis site" description="Tighter binding of NADH.">
    <original>R</original>
    <variation>H</variation>
    <location>
        <position position="238"/>
    </location>
</feature>
<feature type="mutagenesis site" description="Tighter binding of NADH.">
    <original>A</original>
    <variation>G</variation>
    <location>
        <position position="272"/>
    </location>
</feature>
<feature type="strand" evidence="7">
    <location>
        <begin position="5"/>
        <end position="7"/>
    </location>
</feature>
<feature type="strand" evidence="7">
    <location>
        <begin position="13"/>
        <end position="17"/>
    </location>
</feature>
<feature type="helix" evidence="7">
    <location>
        <begin position="26"/>
        <end position="28"/>
    </location>
</feature>
<feature type="helix" evidence="7">
    <location>
        <begin position="29"/>
        <end position="39"/>
    </location>
</feature>
<feature type="strand" evidence="7">
    <location>
        <begin position="43"/>
        <end position="45"/>
    </location>
</feature>
<feature type="helix" evidence="7">
    <location>
        <begin position="47"/>
        <end position="49"/>
    </location>
</feature>
<feature type="helix" evidence="7">
    <location>
        <begin position="54"/>
        <end position="63"/>
    </location>
</feature>
<feature type="helix" evidence="7">
    <location>
        <begin position="67"/>
        <end position="69"/>
    </location>
</feature>
<feature type="strand" evidence="7">
    <location>
        <begin position="71"/>
        <end position="76"/>
    </location>
</feature>
<feature type="helix" evidence="8">
    <location>
        <begin position="78"/>
        <end position="80"/>
    </location>
</feature>
<feature type="helix" evidence="7">
    <location>
        <begin position="86"/>
        <end position="97"/>
    </location>
</feature>
<feature type="strand" evidence="7">
    <location>
        <begin position="102"/>
        <end position="107"/>
    </location>
</feature>
<feature type="helix" evidence="8">
    <location>
        <begin position="112"/>
        <end position="114"/>
    </location>
</feature>
<feature type="helix" evidence="7">
    <location>
        <begin position="117"/>
        <end position="129"/>
    </location>
</feature>
<feature type="strand" evidence="7">
    <location>
        <begin position="132"/>
        <end position="140"/>
    </location>
</feature>
<feature type="helix" evidence="7">
    <location>
        <begin position="143"/>
        <end position="153"/>
    </location>
</feature>
<feature type="strand" evidence="7">
    <location>
        <begin position="158"/>
        <end position="163"/>
    </location>
</feature>
<feature type="helix" evidence="7">
    <location>
        <begin position="171"/>
        <end position="179"/>
    </location>
</feature>
<feature type="strand" evidence="7">
    <location>
        <begin position="183"/>
        <end position="188"/>
    </location>
</feature>
<feature type="helix" evidence="7">
    <location>
        <begin position="191"/>
        <end position="193"/>
    </location>
</feature>
<feature type="helix" evidence="7">
    <location>
        <begin position="201"/>
        <end position="210"/>
    </location>
</feature>
<feature type="helix" evidence="7">
    <location>
        <begin position="214"/>
        <end position="224"/>
    </location>
</feature>
<feature type="helix" evidence="7">
    <location>
        <begin position="236"/>
        <end position="243"/>
    </location>
</feature>
<feature type="helix" evidence="7">
    <location>
        <begin position="252"/>
        <end position="259"/>
    </location>
</feature>
<feature type="strand" evidence="8">
    <location>
        <begin position="264"/>
        <end position="266"/>
    </location>
</feature>
<feature type="turn" evidence="8">
    <location>
        <begin position="274"/>
        <end position="276"/>
    </location>
</feature>
<sequence length="278" mass="30119">MTVPSIVLNDGNSIPQLGYGVFKVPPADTQRAVEEALEVGYRHIDTAAIYGNEEGVGAAIAASGIARDDLFITTKLWNDRHDGDEPAAAIAESLAKLALDQVDLYLVHWPTPAADNYVHAWEKMIELRAAGLTRSIGVSNHLVPHLERIVAATGVVPAVNQIELHPAYQQREITDWAAAHDVKIESWGPLGQGKYDLFGAEPVTAAAAAHGKTPAQAVLRWHLQKGFVVFPKSVRRERLEENLDVFDFDLTDTEIAAIDAMDPGDGSGRVSAHPDEVD</sequence>
<comment type="function">
    <text>Catalyzes the reduction of 2,5-diketo-D-gluconic acid (25DKG) to 2-keto-L-gulonic acid (2KLG). 5-keto-D-fructose and dihydroxyacetone can also serve as substrates. 25DKGR-A exhibits a greater selectivity for the substrate and higher thermal stability than 25DKGR-B.</text>
</comment>
<comment type="catalytic activity">
    <reaction>
        <text>2-dehydro-L-idonate + NADP(+) = 2,5-didehydro-D-gluconate + NADPH + H(+)</text>
        <dbReference type="Rhea" id="RHEA:35111"/>
        <dbReference type="ChEBI" id="CHEBI:11449"/>
        <dbReference type="ChEBI" id="CHEBI:15378"/>
        <dbReference type="ChEBI" id="CHEBI:36602"/>
        <dbReference type="ChEBI" id="CHEBI:57783"/>
        <dbReference type="ChEBI" id="CHEBI:58349"/>
        <dbReference type="EC" id="1.1.1.346"/>
    </reaction>
</comment>
<comment type="activity regulation">
    <text>Inhibited by Zn(2+), Fe(3+), Cu(2+) and Ni(2+).</text>
</comment>
<comment type="biophysicochemical properties">
    <kinetics>
        <KM evidence="4">26 mM for 2,5-diketo-D-gluconate</KM>
        <KM evidence="4">10 uM for NADPH</KM>
    </kinetics>
    <phDependence>
        <text evidence="4">Optimum pH is 6.4. Active over a broad pH range.</text>
    </phDependence>
</comment>
<comment type="subunit">
    <text evidence="3">Monomer.</text>
</comment>
<comment type="subcellular location">
    <subcellularLocation>
        <location>Cytoplasm</location>
    </subcellularLocation>
</comment>
<comment type="biotechnology">
    <text>Introduced by genetic manipulation and expressed in Erwinia herbicola by Anderson et al. The resultant organism is able to convert in a single fermentative step D-glucose into 2-keto-L-gulonic acid, a key precursor in the industrial production of L-ascorbic acid (vitamin C). However, the technology still needs some working on and is not used in commercial production at present.</text>
</comment>
<comment type="miscellaneous">
    <text>Modeling study indicates that the active site may not be optimized for 2,5-diketo-D-gluconic acid.</text>
</comment>
<comment type="similarity">
    <text evidence="6">Belongs to the aldo/keto reductase family.</text>
</comment>
<evidence type="ECO:0000256" key="1">
    <source>
        <dbReference type="SAM" id="MobiDB-lite"/>
    </source>
</evidence>
<evidence type="ECO:0000269" key="2">
    <source>
    </source>
</evidence>
<evidence type="ECO:0000269" key="3">
    <source>
    </source>
</evidence>
<evidence type="ECO:0000269" key="4">
    <source>
    </source>
</evidence>
<evidence type="ECO:0000269" key="5">
    <source ref="1"/>
</evidence>
<evidence type="ECO:0000305" key="6"/>
<evidence type="ECO:0007829" key="7">
    <source>
        <dbReference type="PDB" id="1HW6"/>
    </source>
</evidence>
<evidence type="ECO:0007829" key="8">
    <source>
        <dbReference type="PDB" id="1M9H"/>
    </source>
</evidence>
<name>DKGA_CORSC</name>
<gene>
    <name type="primary">dkgA</name>
</gene>